<organism>
    <name type="scientific">Nitrosomonas europaea (strain ATCC 19718 / CIP 103999 / KCTC 2705 / NBRC 14298)</name>
    <dbReference type="NCBI Taxonomy" id="228410"/>
    <lineage>
        <taxon>Bacteria</taxon>
        <taxon>Pseudomonadati</taxon>
        <taxon>Pseudomonadota</taxon>
        <taxon>Betaproteobacteria</taxon>
        <taxon>Nitrosomonadales</taxon>
        <taxon>Nitrosomonadaceae</taxon>
        <taxon>Nitrosomonas</taxon>
    </lineage>
</organism>
<comment type="function">
    <text evidence="1">May play a key role in the regulation of the intracellular concentration of adenosylhomocysteine.</text>
</comment>
<comment type="catalytic activity">
    <reaction evidence="1">
        <text>S-adenosyl-L-homocysteine + H2O = L-homocysteine + adenosine</text>
        <dbReference type="Rhea" id="RHEA:21708"/>
        <dbReference type="ChEBI" id="CHEBI:15377"/>
        <dbReference type="ChEBI" id="CHEBI:16335"/>
        <dbReference type="ChEBI" id="CHEBI:57856"/>
        <dbReference type="ChEBI" id="CHEBI:58199"/>
        <dbReference type="EC" id="3.13.2.1"/>
    </reaction>
</comment>
<comment type="cofactor">
    <cofactor evidence="1">
        <name>NAD(+)</name>
        <dbReference type="ChEBI" id="CHEBI:57540"/>
    </cofactor>
    <text evidence="1">Binds 1 NAD(+) per subunit.</text>
</comment>
<comment type="pathway">
    <text evidence="1">Amino-acid biosynthesis; L-homocysteine biosynthesis; L-homocysteine from S-adenosyl-L-homocysteine: step 1/1.</text>
</comment>
<comment type="subcellular location">
    <subcellularLocation>
        <location evidence="1">Cytoplasm</location>
    </subcellularLocation>
</comment>
<comment type="similarity">
    <text evidence="1">Belongs to the adenosylhomocysteinase family.</text>
</comment>
<feature type="chain" id="PRO_0000116972" description="Adenosylhomocysteinase">
    <location>
        <begin position="1"/>
        <end position="478"/>
    </location>
</feature>
<feature type="binding site" evidence="1">
    <location>
        <position position="67"/>
    </location>
    <ligand>
        <name>substrate</name>
    </ligand>
</feature>
<feature type="binding site" evidence="1">
    <location>
        <position position="144"/>
    </location>
    <ligand>
        <name>substrate</name>
    </ligand>
</feature>
<feature type="binding site" evidence="1">
    <location>
        <position position="204"/>
    </location>
    <ligand>
        <name>substrate</name>
    </ligand>
</feature>
<feature type="binding site" evidence="1">
    <location>
        <begin position="205"/>
        <end position="207"/>
    </location>
    <ligand>
        <name>NAD(+)</name>
        <dbReference type="ChEBI" id="CHEBI:57540"/>
    </ligand>
</feature>
<feature type="binding site" evidence="1">
    <location>
        <position position="234"/>
    </location>
    <ligand>
        <name>substrate</name>
    </ligand>
</feature>
<feature type="binding site" evidence="1">
    <location>
        <position position="238"/>
    </location>
    <ligand>
        <name>substrate</name>
    </ligand>
</feature>
<feature type="binding site" evidence="1">
    <location>
        <position position="239"/>
    </location>
    <ligand>
        <name>NAD(+)</name>
        <dbReference type="ChEBI" id="CHEBI:57540"/>
    </ligand>
</feature>
<feature type="binding site" evidence="1">
    <location>
        <begin position="268"/>
        <end position="273"/>
    </location>
    <ligand>
        <name>NAD(+)</name>
        <dbReference type="ChEBI" id="CHEBI:57540"/>
    </ligand>
</feature>
<feature type="binding site" evidence="1">
    <location>
        <position position="291"/>
    </location>
    <ligand>
        <name>NAD(+)</name>
        <dbReference type="ChEBI" id="CHEBI:57540"/>
    </ligand>
</feature>
<feature type="binding site" evidence="1">
    <location>
        <position position="326"/>
    </location>
    <ligand>
        <name>NAD(+)</name>
        <dbReference type="ChEBI" id="CHEBI:57540"/>
    </ligand>
</feature>
<feature type="binding site" evidence="1">
    <location>
        <begin position="347"/>
        <end position="349"/>
    </location>
    <ligand>
        <name>NAD(+)</name>
        <dbReference type="ChEBI" id="CHEBI:57540"/>
    </ligand>
</feature>
<feature type="binding site" evidence="1">
    <location>
        <position position="392"/>
    </location>
    <ligand>
        <name>NAD(+)</name>
        <dbReference type="ChEBI" id="CHEBI:57540"/>
    </ligand>
</feature>
<name>SAHH_NITEU</name>
<keyword id="KW-0963">Cytoplasm</keyword>
<keyword id="KW-0378">Hydrolase</keyword>
<keyword id="KW-0520">NAD</keyword>
<keyword id="KW-0554">One-carbon metabolism</keyword>
<keyword id="KW-1185">Reference proteome</keyword>
<protein>
    <recommendedName>
        <fullName evidence="1">Adenosylhomocysteinase</fullName>
        <ecNumber evidence="1">3.13.2.1</ecNumber>
    </recommendedName>
    <alternativeName>
        <fullName evidence="1">S-adenosyl-L-homocysteine hydrolase</fullName>
        <shortName evidence="1">AdoHcyase</shortName>
    </alternativeName>
</protein>
<dbReference type="EC" id="3.13.2.1" evidence="1"/>
<dbReference type="EMBL" id="AL954747">
    <property type="protein sequence ID" value="CAD84571.1"/>
    <property type="molecule type" value="Genomic_DNA"/>
</dbReference>
<dbReference type="RefSeq" id="WP_011111283.1">
    <property type="nucleotide sequence ID" value="NC_004757.1"/>
</dbReference>
<dbReference type="SMR" id="Q82WL1"/>
<dbReference type="STRING" id="228410.NE0660"/>
<dbReference type="GeneID" id="87103857"/>
<dbReference type="KEGG" id="neu:NE0660"/>
<dbReference type="eggNOG" id="COG0499">
    <property type="taxonomic scope" value="Bacteria"/>
</dbReference>
<dbReference type="HOGENOM" id="CLU_025194_2_1_4"/>
<dbReference type="OrthoDB" id="9802717at2"/>
<dbReference type="PhylomeDB" id="Q82WL1"/>
<dbReference type="UniPathway" id="UPA00314">
    <property type="reaction ID" value="UER00076"/>
</dbReference>
<dbReference type="Proteomes" id="UP000001416">
    <property type="component" value="Chromosome"/>
</dbReference>
<dbReference type="GO" id="GO:0005829">
    <property type="term" value="C:cytosol"/>
    <property type="evidence" value="ECO:0007669"/>
    <property type="project" value="TreeGrafter"/>
</dbReference>
<dbReference type="GO" id="GO:0004013">
    <property type="term" value="F:adenosylhomocysteinase activity"/>
    <property type="evidence" value="ECO:0007669"/>
    <property type="project" value="UniProtKB-UniRule"/>
</dbReference>
<dbReference type="GO" id="GO:0071269">
    <property type="term" value="P:L-homocysteine biosynthetic process"/>
    <property type="evidence" value="ECO:0007669"/>
    <property type="project" value="UniProtKB-UniRule"/>
</dbReference>
<dbReference type="GO" id="GO:0006730">
    <property type="term" value="P:one-carbon metabolic process"/>
    <property type="evidence" value="ECO:0007669"/>
    <property type="project" value="UniProtKB-KW"/>
</dbReference>
<dbReference type="GO" id="GO:0033353">
    <property type="term" value="P:S-adenosylmethionine cycle"/>
    <property type="evidence" value="ECO:0007669"/>
    <property type="project" value="TreeGrafter"/>
</dbReference>
<dbReference type="CDD" id="cd00401">
    <property type="entry name" value="SAHH"/>
    <property type="match status" value="1"/>
</dbReference>
<dbReference type="FunFam" id="3.40.50.720:FF:000004">
    <property type="entry name" value="Adenosylhomocysteinase"/>
    <property type="match status" value="1"/>
</dbReference>
<dbReference type="Gene3D" id="3.40.50.1480">
    <property type="entry name" value="Adenosylhomocysteinase-like"/>
    <property type="match status" value="1"/>
</dbReference>
<dbReference type="Gene3D" id="3.40.50.720">
    <property type="entry name" value="NAD(P)-binding Rossmann-like Domain"/>
    <property type="match status" value="1"/>
</dbReference>
<dbReference type="HAMAP" id="MF_00563">
    <property type="entry name" value="AdoHcyase"/>
    <property type="match status" value="1"/>
</dbReference>
<dbReference type="InterPro" id="IPR042172">
    <property type="entry name" value="Adenosylhomocyst_ase-like_sf"/>
</dbReference>
<dbReference type="InterPro" id="IPR000043">
    <property type="entry name" value="Adenosylhomocysteinase-like"/>
</dbReference>
<dbReference type="InterPro" id="IPR015878">
    <property type="entry name" value="Ado_hCys_hydrolase_NAD-bd"/>
</dbReference>
<dbReference type="InterPro" id="IPR036291">
    <property type="entry name" value="NAD(P)-bd_dom_sf"/>
</dbReference>
<dbReference type="InterPro" id="IPR020082">
    <property type="entry name" value="S-Ado-L-homoCys_hydrolase_CS"/>
</dbReference>
<dbReference type="NCBIfam" id="TIGR00936">
    <property type="entry name" value="ahcY"/>
    <property type="match status" value="1"/>
</dbReference>
<dbReference type="NCBIfam" id="NF004005">
    <property type="entry name" value="PRK05476.2-3"/>
    <property type="match status" value="1"/>
</dbReference>
<dbReference type="PANTHER" id="PTHR23420">
    <property type="entry name" value="ADENOSYLHOMOCYSTEINASE"/>
    <property type="match status" value="1"/>
</dbReference>
<dbReference type="PANTHER" id="PTHR23420:SF0">
    <property type="entry name" value="ADENOSYLHOMOCYSTEINASE"/>
    <property type="match status" value="1"/>
</dbReference>
<dbReference type="Pfam" id="PF05221">
    <property type="entry name" value="AdoHcyase"/>
    <property type="match status" value="1"/>
</dbReference>
<dbReference type="Pfam" id="PF00670">
    <property type="entry name" value="AdoHcyase_NAD"/>
    <property type="match status" value="1"/>
</dbReference>
<dbReference type="PIRSF" id="PIRSF001109">
    <property type="entry name" value="Ad_hcy_hydrolase"/>
    <property type="match status" value="1"/>
</dbReference>
<dbReference type="SMART" id="SM00996">
    <property type="entry name" value="AdoHcyase"/>
    <property type="match status" value="1"/>
</dbReference>
<dbReference type="SMART" id="SM00997">
    <property type="entry name" value="AdoHcyase_NAD"/>
    <property type="match status" value="1"/>
</dbReference>
<dbReference type="SUPFAM" id="SSF52283">
    <property type="entry name" value="Formate/glycerate dehydrogenase catalytic domain-like"/>
    <property type="match status" value="1"/>
</dbReference>
<dbReference type="SUPFAM" id="SSF51735">
    <property type="entry name" value="NAD(P)-binding Rossmann-fold domains"/>
    <property type="match status" value="1"/>
</dbReference>
<dbReference type="PROSITE" id="PS00738">
    <property type="entry name" value="ADOHCYASE_1"/>
    <property type="match status" value="1"/>
</dbReference>
<dbReference type="PROSITE" id="PS00739">
    <property type="entry name" value="ADOHCYASE_2"/>
    <property type="match status" value="1"/>
</dbReference>
<sequence>MSATINPVVDNSVFTDCKVADLSLADWGRKEIAIAETEMPGLMALREQYADKKPLAGARIAGSLHMTIQTAVLIETLVALGAEVRWASCNIFSTQDHAAAAIAARNIPVFAYKGESLEEYWDYAHQIFEWASDGSHTANMILDDGGDATLLLILGSKAERDPSVIANPTNEEEQVLFASIRSRLASHPGWYSRNLAAIRGVTEETTTGVHRLYEMEKKGELPFPAINVNDSVTKSKFDNLYGCRESLVDGIKRATDVMIAGKIAVVCGYGDVGKGCAQSLRGLGATVWITEIDPICALQAAMEGYRVVTMDDACDKADIFVTATGNLRVITHDHMLKMKDQSIICNIGHFDSEIDIASVQKYQWENIKPQVDHVIFPTGRRIIVLAQGRLVNLGCATGHPSFVMSSSFTNQVLAQIELWQNGKDYQKKVYVLPKRLDEMVARLHLGKLGVKLTELTDEQAHYLNLDKNGPYKPEMYRY</sequence>
<reference key="1">
    <citation type="journal article" date="2003" name="J. Bacteriol.">
        <title>Complete genome sequence of the ammonia-oxidizing bacterium and obligate chemolithoautotroph Nitrosomonas europaea.</title>
        <authorList>
            <person name="Chain P."/>
            <person name="Lamerdin J.E."/>
            <person name="Larimer F.W."/>
            <person name="Regala W."/>
            <person name="Lao V."/>
            <person name="Land M.L."/>
            <person name="Hauser L."/>
            <person name="Hooper A.B."/>
            <person name="Klotz M.G."/>
            <person name="Norton J."/>
            <person name="Sayavedra-Soto L.A."/>
            <person name="Arciero D.M."/>
            <person name="Hommes N.G."/>
            <person name="Whittaker M.M."/>
            <person name="Arp D.J."/>
        </authorList>
    </citation>
    <scope>NUCLEOTIDE SEQUENCE [LARGE SCALE GENOMIC DNA]</scope>
    <source>
        <strain>ATCC 19718 / CIP 103999 / KCTC 2705 / NBRC 14298</strain>
    </source>
</reference>
<accession>Q82WL1</accession>
<proteinExistence type="inferred from homology"/>
<evidence type="ECO:0000255" key="1">
    <source>
        <dbReference type="HAMAP-Rule" id="MF_00563"/>
    </source>
</evidence>
<gene>
    <name evidence="1" type="primary">ahcY</name>
    <name type="ordered locus">NE0660</name>
</gene>